<protein>
    <recommendedName>
        <fullName evidence="1">Chorismate synthase</fullName>
        <shortName evidence="1">CS</shortName>
        <ecNumber evidence="1">4.2.3.5</ecNumber>
    </recommendedName>
    <alternativeName>
        <fullName evidence="1">5-enolpyruvylshikimate-3-phosphate phospholyase</fullName>
    </alternativeName>
</protein>
<keyword id="KW-0028">Amino-acid biosynthesis</keyword>
<keyword id="KW-0057">Aromatic amino acid biosynthesis</keyword>
<keyword id="KW-0274">FAD</keyword>
<keyword id="KW-0285">Flavoprotein</keyword>
<keyword id="KW-0288">FMN</keyword>
<keyword id="KW-0456">Lyase</keyword>
<keyword id="KW-0521">NADP</keyword>
<gene>
    <name evidence="1" type="primary">aroC</name>
    <name type="ordered locus">BMEI1506</name>
</gene>
<reference key="1">
    <citation type="journal article" date="2002" name="Proc. Natl. Acad. Sci. U.S.A.">
        <title>The genome sequence of the facultative intracellular pathogen Brucella melitensis.</title>
        <authorList>
            <person name="DelVecchio V.G."/>
            <person name="Kapatral V."/>
            <person name="Redkar R.J."/>
            <person name="Patra G."/>
            <person name="Mujer C."/>
            <person name="Los T."/>
            <person name="Ivanova N."/>
            <person name="Anderson I."/>
            <person name="Bhattacharyya A."/>
            <person name="Lykidis A."/>
            <person name="Reznik G."/>
            <person name="Jablonski L."/>
            <person name="Larsen N."/>
            <person name="D'Souza M."/>
            <person name="Bernal A."/>
            <person name="Mazur M."/>
            <person name="Goltsman E."/>
            <person name="Selkov E."/>
            <person name="Elzer P.H."/>
            <person name="Hagius S."/>
            <person name="O'Callaghan D."/>
            <person name="Letesson J.-J."/>
            <person name="Haselkorn R."/>
            <person name="Kyrpides N.C."/>
            <person name="Overbeek R."/>
        </authorList>
    </citation>
    <scope>NUCLEOTIDE SEQUENCE [LARGE SCALE GENOMIC DNA]</scope>
    <source>
        <strain>ATCC 23456 / CCUG 17765 / NCTC 10094 / 16M</strain>
    </source>
</reference>
<feature type="chain" id="PRO_0000140561" description="Chorismate synthase">
    <location>
        <begin position="1"/>
        <end position="364"/>
    </location>
</feature>
<feature type="binding site" evidence="1">
    <location>
        <position position="48"/>
    </location>
    <ligand>
        <name>NADP(+)</name>
        <dbReference type="ChEBI" id="CHEBI:58349"/>
    </ligand>
</feature>
<feature type="binding site" evidence="1">
    <location>
        <begin position="131"/>
        <end position="133"/>
    </location>
    <ligand>
        <name>FMN</name>
        <dbReference type="ChEBI" id="CHEBI:58210"/>
    </ligand>
</feature>
<feature type="binding site" evidence="1">
    <location>
        <begin position="243"/>
        <end position="244"/>
    </location>
    <ligand>
        <name>FMN</name>
        <dbReference type="ChEBI" id="CHEBI:58210"/>
    </ligand>
</feature>
<feature type="binding site" evidence="1">
    <location>
        <position position="288"/>
    </location>
    <ligand>
        <name>FMN</name>
        <dbReference type="ChEBI" id="CHEBI:58210"/>
    </ligand>
</feature>
<feature type="binding site" evidence="1">
    <location>
        <begin position="303"/>
        <end position="307"/>
    </location>
    <ligand>
        <name>FMN</name>
        <dbReference type="ChEBI" id="CHEBI:58210"/>
    </ligand>
</feature>
<feature type="binding site" evidence="1">
    <location>
        <position position="329"/>
    </location>
    <ligand>
        <name>FMN</name>
        <dbReference type="ChEBI" id="CHEBI:58210"/>
    </ligand>
</feature>
<sequence>MSHNSFGHLFRVTTWGESHGLALGCVVDGCPPGITFTEAEIQSFLDKRKPGQSKYTTQRREPDQVRVLSGVLLGEDGVTMTTTGTPISMMIENTDQRSKDYGEIARQYRPGHADYAYDVKYGIRDYRGGGRSSARETAARVAAGAIARKVVPGLEVRGALVSIGAHDIDRSRWNWAEVDNNPFFTPDAGSVEVFADYLDGIRKNGSSVGAIIEIVAEGVPAGIGAPIYGKLDQDIASYLMSINAVKGVEIGNGFEAARLTGEENADEMRMGNDGKPIFLSNHAGGVLGGIATGAPVVARFAVKPTSSILTPRRSIDKDGNEVDVMTRGRHDPCVGIRAVPIGEAMVACAIADHYLRHRGQTGRV</sequence>
<accession>P63607</accession>
<accession>Q8G299</accession>
<accession>Q8YFL4</accession>
<evidence type="ECO:0000255" key="1">
    <source>
        <dbReference type="HAMAP-Rule" id="MF_00300"/>
    </source>
</evidence>
<comment type="function">
    <text evidence="1">Catalyzes the anti-1,4-elimination of the C-3 phosphate and the C-6 proR hydrogen from 5-enolpyruvylshikimate-3-phosphate (EPSP) to yield chorismate, which is the branch point compound that serves as the starting substrate for the three terminal pathways of aromatic amino acid biosynthesis. This reaction introduces a second double bond into the aromatic ring system.</text>
</comment>
<comment type="catalytic activity">
    <reaction evidence="1">
        <text>5-O-(1-carboxyvinyl)-3-phosphoshikimate = chorismate + phosphate</text>
        <dbReference type="Rhea" id="RHEA:21020"/>
        <dbReference type="ChEBI" id="CHEBI:29748"/>
        <dbReference type="ChEBI" id="CHEBI:43474"/>
        <dbReference type="ChEBI" id="CHEBI:57701"/>
        <dbReference type="EC" id="4.2.3.5"/>
    </reaction>
</comment>
<comment type="cofactor">
    <cofactor evidence="1">
        <name>FMNH2</name>
        <dbReference type="ChEBI" id="CHEBI:57618"/>
    </cofactor>
    <text evidence="1">Reduced FMN (FMNH(2)).</text>
</comment>
<comment type="pathway">
    <text evidence="1">Metabolic intermediate biosynthesis; chorismate biosynthesis; chorismate from D-erythrose 4-phosphate and phosphoenolpyruvate: step 7/7.</text>
</comment>
<comment type="subunit">
    <text evidence="1">Homotetramer.</text>
</comment>
<comment type="similarity">
    <text evidence="1">Belongs to the chorismate synthase family.</text>
</comment>
<organism>
    <name type="scientific">Brucella melitensis biotype 1 (strain ATCC 23456 / CCUG 17765 / NCTC 10094 / 16M)</name>
    <dbReference type="NCBI Taxonomy" id="224914"/>
    <lineage>
        <taxon>Bacteria</taxon>
        <taxon>Pseudomonadati</taxon>
        <taxon>Pseudomonadota</taxon>
        <taxon>Alphaproteobacteria</taxon>
        <taxon>Hyphomicrobiales</taxon>
        <taxon>Brucellaceae</taxon>
        <taxon>Brucella/Ochrobactrum group</taxon>
        <taxon>Brucella</taxon>
    </lineage>
</organism>
<dbReference type="EC" id="4.2.3.5" evidence="1"/>
<dbReference type="EMBL" id="AE008917">
    <property type="protein sequence ID" value="AAL52687.1"/>
    <property type="molecule type" value="Genomic_DNA"/>
</dbReference>
<dbReference type="PIR" id="AD3440">
    <property type="entry name" value="AD3440"/>
</dbReference>
<dbReference type="RefSeq" id="WP_002963585.1">
    <property type="nucleotide sequence ID" value="NZ_GG703778.1"/>
</dbReference>
<dbReference type="SMR" id="P63607"/>
<dbReference type="GeneID" id="97534201"/>
<dbReference type="KEGG" id="bme:BMEI1506"/>
<dbReference type="KEGG" id="bmel:DK63_1984"/>
<dbReference type="PATRIC" id="fig|224914.52.peg.2085"/>
<dbReference type="eggNOG" id="COG0082">
    <property type="taxonomic scope" value="Bacteria"/>
</dbReference>
<dbReference type="PhylomeDB" id="P63607"/>
<dbReference type="UniPathway" id="UPA00053">
    <property type="reaction ID" value="UER00090"/>
</dbReference>
<dbReference type="Proteomes" id="UP000000419">
    <property type="component" value="Chromosome I"/>
</dbReference>
<dbReference type="GO" id="GO:0005829">
    <property type="term" value="C:cytosol"/>
    <property type="evidence" value="ECO:0007669"/>
    <property type="project" value="TreeGrafter"/>
</dbReference>
<dbReference type="GO" id="GO:0004107">
    <property type="term" value="F:chorismate synthase activity"/>
    <property type="evidence" value="ECO:0007669"/>
    <property type="project" value="UniProtKB-UniRule"/>
</dbReference>
<dbReference type="GO" id="GO:0010181">
    <property type="term" value="F:FMN binding"/>
    <property type="evidence" value="ECO:0007669"/>
    <property type="project" value="TreeGrafter"/>
</dbReference>
<dbReference type="GO" id="GO:0008652">
    <property type="term" value="P:amino acid biosynthetic process"/>
    <property type="evidence" value="ECO:0007669"/>
    <property type="project" value="UniProtKB-KW"/>
</dbReference>
<dbReference type="GO" id="GO:0009073">
    <property type="term" value="P:aromatic amino acid family biosynthetic process"/>
    <property type="evidence" value="ECO:0007669"/>
    <property type="project" value="UniProtKB-KW"/>
</dbReference>
<dbReference type="GO" id="GO:0009423">
    <property type="term" value="P:chorismate biosynthetic process"/>
    <property type="evidence" value="ECO:0007669"/>
    <property type="project" value="UniProtKB-UniRule"/>
</dbReference>
<dbReference type="CDD" id="cd07304">
    <property type="entry name" value="Chorismate_synthase"/>
    <property type="match status" value="1"/>
</dbReference>
<dbReference type="Gene3D" id="3.60.150.10">
    <property type="entry name" value="Chorismate synthase AroC"/>
    <property type="match status" value="1"/>
</dbReference>
<dbReference type="HAMAP" id="MF_00300">
    <property type="entry name" value="Chorismate_synth"/>
    <property type="match status" value="1"/>
</dbReference>
<dbReference type="InterPro" id="IPR000453">
    <property type="entry name" value="Chorismate_synth"/>
</dbReference>
<dbReference type="InterPro" id="IPR035904">
    <property type="entry name" value="Chorismate_synth_AroC_sf"/>
</dbReference>
<dbReference type="InterPro" id="IPR020541">
    <property type="entry name" value="Chorismate_synthase_CS"/>
</dbReference>
<dbReference type="NCBIfam" id="TIGR00033">
    <property type="entry name" value="aroC"/>
    <property type="match status" value="1"/>
</dbReference>
<dbReference type="NCBIfam" id="NF003793">
    <property type="entry name" value="PRK05382.1"/>
    <property type="match status" value="1"/>
</dbReference>
<dbReference type="PANTHER" id="PTHR21085">
    <property type="entry name" value="CHORISMATE SYNTHASE"/>
    <property type="match status" value="1"/>
</dbReference>
<dbReference type="PANTHER" id="PTHR21085:SF0">
    <property type="entry name" value="CHORISMATE SYNTHASE"/>
    <property type="match status" value="1"/>
</dbReference>
<dbReference type="Pfam" id="PF01264">
    <property type="entry name" value="Chorismate_synt"/>
    <property type="match status" value="1"/>
</dbReference>
<dbReference type="PIRSF" id="PIRSF001456">
    <property type="entry name" value="Chorismate_synth"/>
    <property type="match status" value="1"/>
</dbReference>
<dbReference type="SUPFAM" id="SSF103263">
    <property type="entry name" value="Chorismate synthase, AroC"/>
    <property type="match status" value="1"/>
</dbReference>
<dbReference type="PROSITE" id="PS00787">
    <property type="entry name" value="CHORISMATE_SYNTHASE_1"/>
    <property type="match status" value="1"/>
</dbReference>
<dbReference type="PROSITE" id="PS00788">
    <property type="entry name" value="CHORISMATE_SYNTHASE_2"/>
    <property type="match status" value="1"/>
</dbReference>
<dbReference type="PROSITE" id="PS00789">
    <property type="entry name" value="CHORISMATE_SYNTHASE_3"/>
    <property type="match status" value="1"/>
</dbReference>
<proteinExistence type="inferred from homology"/>
<name>AROC_BRUME</name>